<reference key="1">
    <citation type="journal article" date="1990" name="J. Mol. Biol.">
        <title>Novel GABAA receptor alpha subunit is expressed only in cerebellar granule cells.</title>
        <authorList>
            <person name="Kato K."/>
        </authorList>
    </citation>
    <scope>NUCLEOTIDE SEQUENCE [MRNA] (ISOFORM 2)</scope>
    <scope>TISSUE SPECIFICITY</scope>
    <source>
        <strain>BALB/cJ</strain>
        <tissue>Brain</tissue>
    </source>
</reference>
<reference key="2">
    <citation type="submission" date="1996-11" db="EMBL/GenBank/DDBJ databases">
        <title>Characterization of the murine GABAA receptor alpha 6 subunit gene.</title>
        <authorList>
            <person name="Glencorse T.A."/>
            <person name="Montgomery K.I."/>
            <person name="Livingston D."/>
            <person name="Davies R.W."/>
        </authorList>
    </citation>
    <scope>NUCLEOTIDE SEQUENCE [GENOMIC DNA] (ISOFORMS 1; 2; 3 AND 4)</scope>
    <source>
        <strain>129/Sv</strain>
    </source>
</reference>
<reference key="3">
    <citation type="submission" date="2000-04" db="EMBL/GenBank/DDBJ databases">
        <title>Detection and ethanol regulation of two forms of the GABA-A receptor alpha-6 subunit in DBA/2J and C57BL/6J mice.</title>
        <authorList>
            <person name="Buck K.J."/>
            <person name="Lischka T.R."/>
        </authorList>
    </citation>
    <scope>NUCLEOTIDE SEQUENCE [MRNA] (ISOFORM 1)</scope>
    <source>
        <strain>C57BL/6J</strain>
        <strain>DBA/2J</strain>
        <tissue>Cerebellum</tissue>
    </source>
</reference>
<reference key="4">
    <citation type="journal article" date="2005" name="Science">
        <title>The transcriptional landscape of the mammalian genome.</title>
        <authorList>
            <person name="Carninci P."/>
            <person name="Kasukawa T."/>
            <person name="Katayama S."/>
            <person name="Gough J."/>
            <person name="Frith M.C."/>
            <person name="Maeda N."/>
            <person name="Oyama R."/>
            <person name="Ravasi T."/>
            <person name="Lenhard B."/>
            <person name="Wells C."/>
            <person name="Kodzius R."/>
            <person name="Shimokawa K."/>
            <person name="Bajic V.B."/>
            <person name="Brenner S.E."/>
            <person name="Batalov S."/>
            <person name="Forrest A.R."/>
            <person name="Zavolan M."/>
            <person name="Davis M.J."/>
            <person name="Wilming L.G."/>
            <person name="Aidinis V."/>
            <person name="Allen J.E."/>
            <person name="Ambesi-Impiombato A."/>
            <person name="Apweiler R."/>
            <person name="Aturaliya R.N."/>
            <person name="Bailey T.L."/>
            <person name="Bansal M."/>
            <person name="Baxter L."/>
            <person name="Beisel K.W."/>
            <person name="Bersano T."/>
            <person name="Bono H."/>
            <person name="Chalk A.M."/>
            <person name="Chiu K.P."/>
            <person name="Choudhary V."/>
            <person name="Christoffels A."/>
            <person name="Clutterbuck D.R."/>
            <person name="Crowe M.L."/>
            <person name="Dalla E."/>
            <person name="Dalrymple B.P."/>
            <person name="de Bono B."/>
            <person name="Della Gatta G."/>
            <person name="di Bernardo D."/>
            <person name="Down T."/>
            <person name="Engstrom P."/>
            <person name="Fagiolini M."/>
            <person name="Faulkner G."/>
            <person name="Fletcher C.F."/>
            <person name="Fukushima T."/>
            <person name="Furuno M."/>
            <person name="Futaki S."/>
            <person name="Gariboldi M."/>
            <person name="Georgii-Hemming P."/>
            <person name="Gingeras T.R."/>
            <person name="Gojobori T."/>
            <person name="Green R.E."/>
            <person name="Gustincich S."/>
            <person name="Harbers M."/>
            <person name="Hayashi Y."/>
            <person name="Hensch T.K."/>
            <person name="Hirokawa N."/>
            <person name="Hill D."/>
            <person name="Huminiecki L."/>
            <person name="Iacono M."/>
            <person name="Ikeo K."/>
            <person name="Iwama A."/>
            <person name="Ishikawa T."/>
            <person name="Jakt M."/>
            <person name="Kanapin A."/>
            <person name="Katoh M."/>
            <person name="Kawasawa Y."/>
            <person name="Kelso J."/>
            <person name="Kitamura H."/>
            <person name="Kitano H."/>
            <person name="Kollias G."/>
            <person name="Krishnan S.P."/>
            <person name="Kruger A."/>
            <person name="Kummerfeld S.K."/>
            <person name="Kurochkin I.V."/>
            <person name="Lareau L.F."/>
            <person name="Lazarevic D."/>
            <person name="Lipovich L."/>
            <person name="Liu J."/>
            <person name="Liuni S."/>
            <person name="McWilliam S."/>
            <person name="Madan Babu M."/>
            <person name="Madera M."/>
            <person name="Marchionni L."/>
            <person name="Matsuda H."/>
            <person name="Matsuzawa S."/>
            <person name="Miki H."/>
            <person name="Mignone F."/>
            <person name="Miyake S."/>
            <person name="Morris K."/>
            <person name="Mottagui-Tabar S."/>
            <person name="Mulder N."/>
            <person name="Nakano N."/>
            <person name="Nakauchi H."/>
            <person name="Ng P."/>
            <person name="Nilsson R."/>
            <person name="Nishiguchi S."/>
            <person name="Nishikawa S."/>
            <person name="Nori F."/>
            <person name="Ohara O."/>
            <person name="Okazaki Y."/>
            <person name="Orlando V."/>
            <person name="Pang K.C."/>
            <person name="Pavan W.J."/>
            <person name="Pavesi G."/>
            <person name="Pesole G."/>
            <person name="Petrovsky N."/>
            <person name="Piazza S."/>
            <person name="Reed J."/>
            <person name="Reid J.F."/>
            <person name="Ring B.Z."/>
            <person name="Ringwald M."/>
            <person name="Rost B."/>
            <person name="Ruan Y."/>
            <person name="Salzberg S.L."/>
            <person name="Sandelin A."/>
            <person name="Schneider C."/>
            <person name="Schoenbach C."/>
            <person name="Sekiguchi K."/>
            <person name="Semple C.A."/>
            <person name="Seno S."/>
            <person name="Sessa L."/>
            <person name="Sheng Y."/>
            <person name="Shibata Y."/>
            <person name="Shimada H."/>
            <person name="Shimada K."/>
            <person name="Silva D."/>
            <person name="Sinclair B."/>
            <person name="Sperling S."/>
            <person name="Stupka E."/>
            <person name="Sugiura K."/>
            <person name="Sultana R."/>
            <person name="Takenaka Y."/>
            <person name="Taki K."/>
            <person name="Tammoja K."/>
            <person name="Tan S.L."/>
            <person name="Tang S."/>
            <person name="Taylor M.S."/>
            <person name="Tegner J."/>
            <person name="Teichmann S.A."/>
            <person name="Ueda H.R."/>
            <person name="van Nimwegen E."/>
            <person name="Verardo R."/>
            <person name="Wei C.L."/>
            <person name="Yagi K."/>
            <person name="Yamanishi H."/>
            <person name="Zabarovsky E."/>
            <person name="Zhu S."/>
            <person name="Zimmer A."/>
            <person name="Hide W."/>
            <person name="Bult C."/>
            <person name="Grimmond S.M."/>
            <person name="Teasdale R.D."/>
            <person name="Liu E.T."/>
            <person name="Brusic V."/>
            <person name="Quackenbush J."/>
            <person name="Wahlestedt C."/>
            <person name="Mattick J.S."/>
            <person name="Hume D.A."/>
            <person name="Kai C."/>
            <person name="Sasaki D."/>
            <person name="Tomaru Y."/>
            <person name="Fukuda S."/>
            <person name="Kanamori-Katayama M."/>
            <person name="Suzuki M."/>
            <person name="Aoki J."/>
            <person name="Arakawa T."/>
            <person name="Iida J."/>
            <person name="Imamura K."/>
            <person name="Itoh M."/>
            <person name="Kato T."/>
            <person name="Kawaji H."/>
            <person name="Kawagashira N."/>
            <person name="Kawashima T."/>
            <person name="Kojima M."/>
            <person name="Kondo S."/>
            <person name="Konno H."/>
            <person name="Nakano K."/>
            <person name="Ninomiya N."/>
            <person name="Nishio T."/>
            <person name="Okada M."/>
            <person name="Plessy C."/>
            <person name="Shibata K."/>
            <person name="Shiraki T."/>
            <person name="Suzuki S."/>
            <person name="Tagami M."/>
            <person name="Waki K."/>
            <person name="Watahiki A."/>
            <person name="Okamura-Oho Y."/>
            <person name="Suzuki H."/>
            <person name="Kawai J."/>
            <person name="Hayashizaki Y."/>
        </authorList>
    </citation>
    <scope>NUCLEOTIDE SEQUENCE [LARGE SCALE MRNA]</scope>
    <source>
        <strain>C57BL/6J</strain>
        <tissue>Cerebellum</tissue>
    </source>
</reference>
<reference key="5">
    <citation type="journal article" date="2009" name="PLoS Biol.">
        <title>Lineage-specific biology revealed by a finished genome assembly of the mouse.</title>
        <authorList>
            <person name="Church D.M."/>
            <person name="Goodstadt L."/>
            <person name="Hillier L.W."/>
            <person name="Zody M.C."/>
            <person name="Goldstein S."/>
            <person name="She X."/>
            <person name="Bult C.J."/>
            <person name="Agarwala R."/>
            <person name="Cherry J.L."/>
            <person name="DiCuccio M."/>
            <person name="Hlavina W."/>
            <person name="Kapustin Y."/>
            <person name="Meric P."/>
            <person name="Maglott D."/>
            <person name="Birtle Z."/>
            <person name="Marques A.C."/>
            <person name="Graves T."/>
            <person name="Zhou S."/>
            <person name="Teague B."/>
            <person name="Potamousis K."/>
            <person name="Churas C."/>
            <person name="Place M."/>
            <person name="Herschleb J."/>
            <person name="Runnheim R."/>
            <person name="Forrest D."/>
            <person name="Amos-Landgraf J."/>
            <person name="Schwartz D.C."/>
            <person name="Cheng Z."/>
            <person name="Lindblad-Toh K."/>
            <person name="Eichler E.E."/>
            <person name="Ponting C.P."/>
        </authorList>
    </citation>
    <scope>NUCLEOTIDE SEQUENCE [LARGE SCALE GENOMIC DNA]</scope>
    <source>
        <strain>C57BL/6J</strain>
    </source>
</reference>
<reference key="6">
    <citation type="journal article" date="2004" name="Genome Res.">
        <title>The status, quality, and expansion of the NIH full-length cDNA project: the Mammalian Gene Collection (MGC).</title>
        <authorList>
            <consortium name="The MGC Project Team"/>
        </authorList>
    </citation>
    <scope>NUCLEOTIDE SEQUENCE [LARGE SCALE MRNA]</scope>
    <source>
        <tissue>Brain</tissue>
    </source>
</reference>
<reference key="7">
    <citation type="journal article" date="2001" name="Nat. Neurosci.">
        <title>GABA(A) receptor cell surface number and subunit stability are regulated by the ubiquitin-like protein Plic-1.</title>
        <authorList>
            <person name="Bedford F.K."/>
            <person name="Kittler J.T."/>
            <person name="Muller E."/>
            <person name="Thomas P."/>
            <person name="Uren J.M."/>
            <person name="Merlo D."/>
            <person name="Wisden W."/>
            <person name="Triller A."/>
            <person name="Smart T.G."/>
            <person name="Moss S.J."/>
        </authorList>
    </citation>
    <scope>INTERACTION WITH UBQLN1</scope>
</reference>
<reference key="8">
    <citation type="journal article" date="2010" name="Cell">
        <title>A tissue-specific atlas of mouse protein phosphorylation and expression.</title>
        <authorList>
            <person name="Huttlin E.L."/>
            <person name="Jedrychowski M.P."/>
            <person name="Elias J.E."/>
            <person name="Goswami T."/>
            <person name="Rad R."/>
            <person name="Beausoleil S.A."/>
            <person name="Villen J."/>
            <person name="Haas W."/>
            <person name="Sowa M.E."/>
            <person name="Gygi S.P."/>
        </authorList>
    </citation>
    <scope>PHOSPHORYLATION [LARGE SCALE ANALYSIS] AT SER-375</scope>
    <scope>IDENTIFICATION BY MASS SPECTROMETRY [LARGE SCALE ANALYSIS]</scope>
    <source>
        <tissue>Brain</tissue>
    </source>
</reference>
<dbReference type="EMBL" id="X51986">
    <property type="protein sequence ID" value="CAA36244.1"/>
    <property type="molecule type" value="mRNA"/>
</dbReference>
<dbReference type="EMBL" id="U77411">
    <property type="protein sequence ID" value="AAD52001.1"/>
    <property type="molecule type" value="Genomic_DNA"/>
</dbReference>
<dbReference type="EMBL" id="U77409">
    <property type="protein sequence ID" value="AAD52001.1"/>
    <property type="status" value="JOINED"/>
    <property type="molecule type" value="Genomic_DNA"/>
</dbReference>
<dbReference type="EMBL" id="U77410">
    <property type="protein sequence ID" value="AAD52001.1"/>
    <property type="status" value="JOINED"/>
    <property type="molecule type" value="Genomic_DNA"/>
</dbReference>
<dbReference type="EMBL" id="U77411">
    <property type="protein sequence ID" value="AAD52002.1"/>
    <property type="molecule type" value="Genomic_DNA"/>
</dbReference>
<dbReference type="EMBL" id="U77409">
    <property type="protein sequence ID" value="AAD52002.1"/>
    <property type="status" value="JOINED"/>
    <property type="molecule type" value="Genomic_DNA"/>
</dbReference>
<dbReference type="EMBL" id="U77410">
    <property type="protein sequence ID" value="AAD52002.1"/>
    <property type="status" value="JOINED"/>
    <property type="molecule type" value="Genomic_DNA"/>
</dbReference>
<dbReference type="EMBL" id="U77411">
    <property type="protein sequence ID" value="AAD52003.1"/>
    <property type="molecule type" value="Genomic_DNA"/>
</dbReference>
<dbReference type="EMBL" id="U77409">
    <property type="protein sequence ID" value="AAD52003.1"/>
    <property type="status" value="JOINED"/>
    <property type="molecule type" value="Genomic_DNA"/>
</dbReference>
<dbReference type="EMBL" id="U77410">
    <property type="protein sequence ID" value="AAD52003.1"/>
    <property type="status" value="JOINED"/>
    <property type="molecule type" value="Genomic_DNA"/>
</dbReference>
<dbReference type="EMBL" id="U77411">
    <property type="protein sequence ID" value="AAD52004.1"/>
    <property type="molecule type" value="Genomic_DNA"/>
</dbReference>
<dbReference type="EMBL" id="U77409">
    <property type="protein sequence ID" value="AAD52004.1"/>
    <property type="status" value="JOINED"/>
    <property type="molecule type" value="Genomic_DNA"/>
</dbReference>
<dbReference type="EMBL" id="U77410">
    <property type="protein sequence ID" value="AAD52004.1"/>
    <property type="status" value="JOINED"/>
    <property type="molecule type" value="Genomic_DNA"/>
</dbReference>
<dbReference type="EMBL" id="AF256197">
    <property type="protein sequence ID" value="AAG28024.1"/>
    <property type="molecule type" value="mRNA"/>
</dbReference>
<dbReference type="EMBL" id="AF256198">
    <property type="protein sequence ID" value="AAG28025.1"/>
    <property type="molecule type" value="mRNA"/>
</dbReference>
<dbReference type="EMBL" id="AK135145">
    <property type="protein sequence ID" value="BAE22438.1"/>
    <property type="molecule type" value="mRNA"/>
</dbReference>
<dbReference type="EMBL" id="AL645823">
    <property type="status" value="NOT_ANNOTATED_CDS"/>
    <property type="molecule type" value="Genomic_DNA"/>
</dbReference>
<dbReference type="EMBL" id="BC145158">
    <property type="protein sequence ID" value="AAI45159.1"/>
    <property type="molecule type" value="mRNA"/>
</dbReference>
<dbReference type="EMBL" id="BC145702">
    <property type="protein sequence ID" value="AAI45703.1"/>
    <property type="molecule type" value="mRNA"/>
</dbReference>
<dbReference type="CCDS" id="CCDS24554.1">
    <molecule id="P16305-2"/>
</dbReference>
<dbReference type="CCDS" id="CCDS48769.1">
    <molecule id="P16305-1"/>
</dbReference>
<dbReference type="CCDS" id="CCDS88145.1">
    <molecule id="P16305-3"/>
</dbReference>
<dbReference type="PIR" id="S11396">
    <property type="entry name" value="S11396"/>
</dbReference>
<dbReference type="RefSeq" id="NP_001093111.1">
    <molecule id="P16305-1"/>
    <property type="nucleotide sequence ID" value="NM_001099641.2"/>
</dbReference>
<dbReference type="RefSeq" id="NP_001345978.1">
    <molecule id="P16305-3"/>
    <property type="nucleotide sequence ID" value="NM_001359049.1"/>
</dbReference>
<dbReference type="RefSeq" id="NP_001418025.1">
    <molecule id="P16305-4"/>
    <property type="nucleotide sequence ID" value="NM_001431096.1"/>
</dbReference>
<dbReference type="RefSeq" id="NP_032094.2">
    <molecule id="P16305-2"/>
    <property type="nucleotide sequence ID" value="NM_008068.3"/>
</dbReference>
<dbReference type="RefSeq" id="XP_006532260.1">
    <property type="nucleotide sequence ID" value="XM_006532197.3"/>
</dbReference>
<dbReference type="SMR" id="P16305"/>
<dbReference type="ComplexPortal" id="CPX-2981">
    <property type="entry name" value="GABA-A receptor, alpha6-beta3-gamma2"/>
</dbReference>
<dbReference type="ComplexPortal" id="CPX-2986">
    <property type="entry name" value="GABA-A receptor, alpha6-beta3-delta"/>
</dbReference>
<dbReference type="ComplexPortal" id="CPX-2987">
    <property type="entry name" value="GABA-A receptor, alpha6-beta2-delta"/>
</dbReference>
<dbReference type="FunCoup" id="P16305">
    <property type="interactions" value="540"/>
</dbReference>
<dbReference type="STRING" id="10090.ENSMUSP00000126114"/>
<dbReference type="ChEMBL" id="CHEMBL2094133"/>
<dbReference type="DrugCentral" id="P16305"/>
<dbReference type="GlyConnect" id="2437">
    <molecule id="P16305-3"/>
    <property type="glycosylation" value="2 N-Linked glycans (2 sites)"/>
</dbReference>
<dbReference type="GlyCosmos" id="P16305">
    <property type="glycosylation" value="3 sites, No reported glycans"/>
</dbReference>
<dbReference type="GlyGen" id="P16305">
    <property type="glycosylation" value="3 sites, 3 N-linked glycans (3 sites)"/>
</dbReference>
<dbReference type="iPTMnet" id="P16305"/>
<dbReference type="PhosphoSitePlus" id="P16305"/>
<dbReference type="PaxDb" id="10090-ENSMUSP00000126114"/>
<dbReference type="PeptideAtlas" id="P16305"/>
<dbReference type="ProteomicsDB" id="273421">
    <molecule id="P16305-1"/>
</dbReference>
<dbReference type="ProteomicsDB" id="273422">
    <molecule id="P16305-2"/>
</dbReference>
<dbReference type="ProteomicsDB" id="273423">
    <molecule id="P16305-3"/>
</dbReference>
<dbReference type="ProteomicsDB" id="273424">
    <molecule id="P16305-4"/>
</dbReference>
<dbReference type="ABCD" id="P16305">
    <property type="antibodies" value="2 sequenced antibodies"/>
</dbReference>
<dbReference type="Antibodypedia" id="28560">
    <property type="antibodies" value="200 antibodies from 34 providers"/>
</dbReference>
<dbReference type="DNASU" id="14399"/>
<dbReference type="Ensembl" id="ENSMUST00000020703.13">
    <molecule id="P16305-2"/>
    <property type="protein sequence ID" value="ENSMUSP00000020703.7"/>
    <property type="gene ID" value="ENSMUSG00000020428.14"/>
</dbReference>
<dbReference type="Ensembl" id="ENSMUST00000109286.4">
    <molecule id="P16305-3"/>
    <property type="protein sequence ID" value="ENSMUSP00000104909.4"/>
    <property type="gene ID" value="ENSMUSG00000020428.14"/>
</dbReference>
<dbReference type="Ensembl" id="ENSMUST00000155218.9">
    <molecule id="P16305-1"/>
    <property type="protein sequence ID" value="ENSMUSP00000126114.2"/>
    <property type="gene ID" value="ENSMUSG00000020428.14"/>
</dbReference>
<dbReference type="GeneID" id="14399"/>
<dbReference type="KEGG" id="mmu:14399"/>
<dbReference type="UCSC" id="uc007img.2">
    <molecule id="P16305-2"/>
    <property type="organism name" value="mouse"/>
</dbReference>
<dbReference type="UCSC" id="uc007imh.2">
    <molecule id="P16305-1"/>
    <property type="organism name" value="mouse"/>
</dbReference>
<dbReference type="AGR" id="MGI:95618"/>
<dbReference type="CTD" id="2559"/>
<dbReference type="MGI" id="MGI:95618">
    <property type="gene designation" value="Gabra6"/>
</dbReference>
<dbReference type="VEuPathDB" id="HostDB:ENSMUSG00000020428"/>
<dbReference type="eggNOG" id="KOG3642">
    <property type="taxonomic scope" value="Eukaryota"/>
</dbReference>
<dbReference type="GeneTree" id="ENSGT00940000156722"/>
<dbReference type="HOGENOM" id="CLU_010920_2_2_1"/>
<dbReference type="InParanoid" id="P16305"/>
<dbReference type="OMA" id="DSRYHLK"/>
<dbReference type="OrthoDB" id="203862at2759"/>
<dbReference type="PhylomeDB" id="P16305"/>
<dbReference type="TreeFam" id="TF315453"/>
<dbReference type="Reactome" id="R-MMU-977443">
    <property type="pathway name" value="GABA receptor activation"/>
</dbReference>
<dbReference type="BioGRID-ORCS" id="14399">
    <property type="hits" value="4 hits in 76 CRISPR screens"/>
</dbReference>
<dbReference type="PRO" id="PR:P16305"/>
<dbReference type="Proteomes" id="UP000000589">
    <property type="component" value="Chromosome 11"/>
</dbReference>
<dbReference type="RNAct" id="P16305">
    <property type="molecule type" value="protein"/>
</dbReference>
<dbReference type="Bgee" id="ENSMUSG00000020428">
    <property type="expression patterns" value="Expressed in cerebellum lobe and 34 other cell types or tissues"/>
</dbReference>
<dbReference type="GO" id="GO:0099192">
    <property type="term" value="C:cerebellar Golgi cell to granule cell synapse"/>
    <property type="evidence" value="ECO:0000314"/>
    <property type="project" value="SynGO"/>
</dbReference>
<dbReference type="GO" id="GO:0034707">
    <property type="term" value="C:chloride channel complex"/>
    <property type="evidence" value="ECO:0007669"/>
    <property type="project" value="UniProtKB-KW"/>
</dbReference>
<dbReference type="GO" id="GO:1902711">
    <property type="term" value="C:GABA-A receptor complex"/>
    <property type="evidence" value="ECO:0000250"/>
    <property type="project" value="ComplexPortal"/>
</dbReference>
<dbReference type="GO" id="GO:0005886">
    <property type="term" value="C:plasma membrane"/>
    <property type="evidence" value="ECO:0000250"/>
    <property type="project" value="UniProtKB"/>
</dbReference>
<dbReference type="GO" id="GO:0099634">
    <property type="term" value="C:postsynaptic specialization membrane"/>
    <property type="evidence" value="ECO:0000250"/>
    <property type="project" value="UniProtKB"/>
</dbReference>
<dbReference type="GO" id="GO:0005254">
    <property type="term" value="F:chloride channel activity"/>
    <property type="evidence" value="ECO:0007669"/>
    <property type="project" value="UniProtKB-KW"/>
</dbReference>
<dbReference type="GO" id="GO:0004890">
    <property type="term" value="F:GABA-A receptor activity"/>
    <property type="evidence" value="ECO:0007669"/>
    <property type="project" value="InterPro"/>
</dbReference>
<dbReference type="GO" id="GO:1904315">
    <property type="term" value="F:transmitter-gated monoatomic ion channel activity involved in regulation of postsynaptic membrane potential"/>
    <property type="evidence" value="ECO:0000314"/>
    <property type="project" value="SynGO"/>
</dbReference>
<dbReference type="GO" id="GO:0007214">
    <property type="term" value="P:gamma-aminobutyric acid signaling pathway"/>
    <property type="evidence" value="ECO:0000303"/>
    <property type="project" value="ComplexPortal"/>
</dbReference>
<dbReference type="CDD" id="cd19052">
    <property type="entry name" value="LGIC_TM_GABAAR_alpha"/>
    <property type="match status" value="1"/>
</dbReference>
<dbReference type="FunFam" id="2.70.170.10:FF:000001">
    <property type="entry name" value="Gamma-aminobutyric acid A receptor subunit alpha-2"/>
    <property type="match status" value="1"/>
</dbReference>
<dbReference type="FunFam" id="1.20.58.390:FF:000002">
    <property type="entry name" value="Putative gamma-aminobutyric acid receptor subunit alpha-5"/>
    <property type="match status" value="1"/>
</dbReference>
<dbReference type="Gene3D" id="2.70.170.10">
    <property type="entry name" value="Neurotransmitter-gated ion-channel ligand-binding domain"/>
    <property type="match status" value="1"/>
</dbReference>
<dbReference type="Gene3D" id="1.20.58.390">
    <property type="entry name" value="Neurotransmitter-gated ion-channel transmembrane domain"/>
    <property type="match status" value="1"/>
</dbReference>
<dbReference type="InterPro" id="IPR006028">
    <property type="entry name" value="GABAA/Glycine_rcpt"/>
</dbReference>
<dbReference type="InterPro" id="IPR001390">
    <property type="entry name" value="GABAAa_rcpt"/>
</dbReference>
<dbReference type="InterPro" id="IPR005436">
    <property type="entry name" value="GABBAa6_rcpt"/>
</dbReference>
<dbReference type="InterPro" id="IPR047024">
    <property type="entry name" value="Gabra-1-6_TM"/>
</dbReference>
<dbReference type="InterPro" id="IPR006202">
    <property type="entry name" value="Neur_chan_lig-bd"/>
</dbReference>
<dbReference type="InterPro" id="IPR036734">
    <property type="entry name" value="Neur_chan_lig-bd_sf"/>
</dbReference>
<dbReference type="InterPro" id="IPR006201">
    <property type="entry name" value="Neur_channel"/>
</dbReference>
<dbReference type="InterPro" id="IPR036719">
    <property type="entry name" value="Neuro-gated_channel_TM_sf"/>
</dbReference>
<dbReference type="InterPro" id="IPR038050">
    <property type="entry name" value="Neuro_actylchol_rec"/>
</dbReference>
<dbReference type="InterPro" id="IPR006029">
    <property type="entry name" value="Neurotrans-gated_channel_TM"/>
</dbReference>
<dbReference type="InterPro" id="IPR018000">
    <property type="entry name" value="Neurotransmitter_ion_chnl_CS"/>
</dbReference>
<dbReference type="NCBIfam" id="TIGR00860">
    <property type="entry name" value="LIC"/>
    <property type="match status" value="1"/>
</dbReference>
<dbReference type="PANTHER" id="PTHR18945">
    <property type="entry name" value="NEUROTRANSMITTER GATED ION CHANNEL"/>
    <property type="match status" value="1"/>
</dbReference>
<dbReference type="Pfam" id="PF02931">
    <property type="entry name" value="Neur_chan_LBD"/>
    <property type="match status" value="1"/>
</dbReference>
<dbReference type="Pfam" id="PF02932">
    <property type="entry name" value="Neur_chan_memb"/>
    <property type="match status" value="1"/>
</dbReference>
<dbReference type="PRINTS" id="PR01079">
    <property type="entry name" value="GABAARALPHA"/>
</dbReference>
<dbReference type="PRINTS" id="PR01619">
    <property type="entry name" value="GABAARALPHA6"/>
</dbReference>
<dbReference type="PRINTS" id="PR00253">
    <property type="entry name" value="GABAARECEPTR"/>
</dbReference>
<dbReference type="PRINTS" id="PR00252">
    <property type="entry name" value="NRIONCHANNEL"/>
</dbReference>
<dbReference type="SUPFAM" id="SSF90112">
    <property type="entry name" value="Neurotransmitter-gated ion-channel transmembrane pore"/>
    <property type="match status" value="1"/>
</dbReference>
<dbReference type="SUPFAM" id="SSF63712">
    <property type="entry name" value="Nicotinic receptor ligand binding domain-like"/>
    <property type="match status" value="1"/>
</dbReference>
<dbReference type="PROSITE" id="PS00236">
    <property type="entry name" value="NEUROTR_ION_CHANNEL"/>
    <property type="match status" value="1"/>
</dbReference>
<keyword id="KW-0025">Alternative splicing</keyword>
<keyword id="KW-1003">Cell membrane</keyword>
<keyword id="KW-0868">Chloride</keyword>
<keyword id="KW-0869">Chloride channel</keyword>
<keyword id="KW-1015">Disulfide bond</keyword>
<keyword id="KW-0325">Glycoprotein</keyword>
<keyword id="KW-0407">Ion channel</keyword>
<keyword id="KW-0406">Ion transport</keyword>
<keyword id="KW-1071">Ligand-gated ion channel</keyword>
<keyword id="KW-0472">Membrane</keyword>
<keyword id="KW-0597">Phosphoprotein</keyword>
<keyword id="KW-0628">Postsynaptic cell membrane</keyword>
<keyword id="KW-0675">Receptor</keyword>
<keyword id="KW-1185">Reference proteome</keyword>
<keyword id="KW-0732">Signal</keyword>
<keyword id="KW-0770">Synapse</keyword>
<keyword id="KW-0812">Transmembrane</keyword>
<keyword id="KW-1133">Transmembrane helix</keyword>
<keyword id="KW-0813">Transport</keyword>
<protein>
    <recommendedName>
        <fullName evidence="6">Gamma-aminobutyric acid receptor subunit alpha-6</fullName>
    </recommendedName>
    <alternativeName>
        <fullName evidence="10">GABA(A) receptor subunit alpha-6</fullName>
        <shortName>GABAAR subunit alpha-6</shortName>
    </alternativeName>
</protein>
<sequence length="453" mass="51106">MVLLLPWLFIILWLENAQAQLEDEGNFYSENVSRILDNLLEGYDNRLRPGFGGAVTEVKTDIYVTSFGPVSDVEMEYTMDVFFRQTWTDERLKFKGPAEILSLNNLMVSKIWTPDTFFRNGKKSIAHNMTTPNKLFRLMQNGTILYTMRLTINADCPMRLVNFPMDGHACPLKFGSYAYPKTEIIYTWKKGPLYSVEVPEESSSLLQYDLIGQTVSSETIKSNTGEYVIMTVYFHLQRKMGYFMIQIYTPCIMTVILSQVSFWINKESVPARTVFGITTVLTMTTLSISARHSLPKVSYATAMDWFIAVCFAFVFSALIEFAAVNYFTNLQSQKAERQAQTAATPPVAKSKASESLQAEIVVHSDSKYHLKKRISSLTLPIVPSSEASKALSRTPILKSTPVSPPLLLPATGGTSKIDQYSRILFPVAFAGFNLVYWIVYLSKDTMEVSSTVE</sequence>
<comment type="function">
    <text evidence="1 2 4">Alpha subunit of the heteropentameric ligand-gated chloride channel gated by gamma-aminobutyric acid (GABA), a major inhibitory neurotransmitter in the brain (By similarity). GABA-gated chloride channels, also named GABA(A) receptors (GABAAR), consist of five subunits arranged around a central pore and contain GABA active binding site(s) located at the alpha and beta subunit interface(s) (By similarity). When activated by GABA, GABAARs selectively allow the flow of chloride anions across the cell membrane down their electrochemical gradient (By similarity). Alpha-6/GABRA6 subunits are found at both synaptic and extrasynaptic sites (By similarity). Chloride influx into the postsynaptic neuron following GABAAR opening decreases the neuron ability to generate a new action potential, thereby reducing nerve transmission (By similarity). Extrasynaptic alpha-6-containing receptors contribute to the tonic GABAergic inhibition. Alpha-6 subunits are also present on glutamatergic synapses (By similarity).</text>
</comment>
<comment type="catalytic activity">
    <reaction evidence="1">
        <text>chloride(in) = chloride(out)</text>
        <dbReference type="Rhea" id="RHEA:29823"/>
        <dbReference type="ChEBI" id="CHEBI:17996"/>
    </reaction>
</comment>
<comment type="subunit">
    <text evidence="2 8">Heteropentamer, formed by a combination of alpha (GABRA1-6), beta (GABRB1-3), gamma (GABRG1-3), delta (GABRD), epsilon (GABRE), rho (GABRR1-3), pi (GABRP) and theta (GABRQ) chains, each subunit exhibiting distinct physiological and pharmacological properties (By similarity). Binds UBQLN1 (PubMed:11528422).</text>
</comment>
<comment type="subcellular location">
    <subcellularLocation>
        <location evidence="4">Postsynaptic cell membrane</location>
        <topology evidence="7">Multi-pass membrane protein</topology>
    </subcellularLocation>
    <subcellularLocation>
        <location evidence="4">Cell membrane</location>
        <topology evidence="7">Multi-pass membrane protein</topology>
    </subcellularLocation>
</comment>
<comment type="alternative products">
    <event type="alternative splicing"/>
    <isoform>
        <id>P16305-1</id>
        <name>1</name>
        <sequence type="displayed"/>
    </isoform>
    <isoform>
        <id>P16305-2</id>
        <name>2</name>
        <sequence type="described" ref="VSP_000086"/>
    </isoform>
    <isoform>
        <id>P16305-3</id>
        <name>3</name>
        <sequence type="described" ref="VSP_000085"/>
    </isoform>
    <isoform>
        <id>P16305-4</id>
        <name>4</name>
        <sequence type="described" ref="VSP_000085 VSP_000086"/>
    </isoform>
</comment>
<comment type="tissue specificity">
    <text evidence="9">Expressed in brain, in cerebellar granule cells.</text>
</comment>
<comment type="domain">
    <text evidence="2">GABAARs subunits share a common topological structure: a peptide sequence made up of a long extracellular N-terminal, four transmembrane domains, intracellular or cytoplasmic domain located between the third and the fourth transmembrane domains.</text>
</comment>
<comment type="similarity">
    <text evidence="12">Belongs to the ligand-gated ion channel (TC 1.A.9) family. Gamma-aminobutyric acid receptor (TC 1.A.9.5) subfamily. GABRA6 sub-subfamily.</text>
</comment>
<name>GBRA6_MOUSE</name>
<gene>
    <name evidence="13" type="primary">Gabra6</name>
    <name type="synonym">Gabra-6</name>
</gene>
<accession>P16305</accession>
<accession>Q5SUU5</accession>
<accession>Q9R0V3</accession>
<accession>Q9R0V4</accession>
<accession>Q9R0V5</accession>
<proteinExistence type="evidence at protein level"/>
<organism>
    <name type="scientific">Mus musculus</name>
    <name type="common">Mouse</name>
    <dbReference type="NCBI Taxonomy" id="10090"/>
    <lineage>
        <taxon>Eukaryota</taxon>
        <taxon>Metazoa</taxon>
        <taxon>Chordata</taxon>
        <taxon>Craniata</taxon>
        <taxon>Vertebrata</taxon>
        <taxon>Euteleostomi</taxon>
        <taxon>Mammalia</taxon>
        <taxon>Eutheria</taxon>
        <taxon>Euarchontoglires</taxon>
        <taxon>Glires</taxon>
        <taxon>Rodentia</taxon>
        <taxon>Myomorpha</taxon>
        <taxon>Muroidea</taxon>
        <taxon>Muridae</taxon>
        <taxon>Murinae</taxon>
        <taxon>Mus</taxon>
        <taxon>Mus</taxon>
    </lineage>
</organism>
<evidence type="ECO:0000250" key="1">
    <source>
        <dbReference type="UniProtKB" id="P08219"/>
    </source>
</evidence>
<evidence type="ECO:0000250" key="2">
    <source>
        <dbReference type="UniProtKB" id="P14867"/>
    </source>
</evidence>
<evidence type="ECO:0000250" key="3">
    <source>
        <dbReference type="UniProtKB" id="P28472"/>
    </source>
</evidence>
<evidence type="ECO:0000250" key="4">
    <source>
        <dbReference type="UniProtKB" id="P30191"/>
    </source>
</evidence>
<evidence type="ECO:0000250" key="5">
    <source>
        <dbReference type="UniProtKB" id="P62813"/>
    </source>
</evidence>
<evidence type="ECO:0000250" key="6">
    <source>
        <dbReference type="UniProtKB" id="Q16445"/>
    </source>
</evidence>
<evidence type="ECO:0000255" key="7"/>
<evidence type="ECO:0000269" key="8">
    <source>
    </source>
</evidence>
<evidence type="ECO:0000269" key="9">
    <source>
    </source>
</evidence>
<evidence type="ECO:0000303" key="10">
    <source>
    </source>
</evidence>
<evidence type="ECO:0000303" key="11">
    <source>
    </source>
</evidence>
<evidence type="ECO:0000305" key="12"/>
<evidence type="ECO:0000312" key="13">
    <source>
        <dbReference type="MGI" id="MGI:95618"/>
    </source>
</evidence>
<evidence type="ECO:0007744" key="14">
    <source>
    </source>
</evidence>
<feature type="signal peptide" evidence="7">
    <location>
        <begin position="1"/>
        <end position="19"/>
    </location>
</feature>
<feature type="chain" id="PRO_0000000448" description="Gamma-aminobutyric acid receptor subunit alpha-6">
    <location>
        <begin position="20"/>
        <end position="453"/>
    </location>
</feature>
<feature type="topological domain" description="Extracellular" evidence="12">
    <location>
        <begin position="20"/>
        <end position="243"/>
    </location>
</feature>
<feature type="transmembrane region" description="Helical" evidence="7">
    <location>
        <begin position="244"/>
        <end position="264"/>
    </location>
</feature>
<feature type="topological domain" description="Cytoplasmic" evidence="12">
    <location>
        <begin position="265"/>
        <end position="270"/>
    </location>
</feature>
<feature type="transmembrane region" description="Helical" evidence="7">
    <location>
        <begin position="271"/>
        <end position="290"/>
    </location>
</feature>
<feature type="topological domain" description="Extracellular" evidence="12">
    <location>
        <begin position="291"/>
        <end position="304"/>
    </location>
</feature>
<feature type="transmembrane region" description="Helical" evidence="7">
    <location>
        <begin position="305"/>
        <end position="325"/>
    </location>
</feature>
<feature type="topological domain" description="Cytoplasmic" evidence="12">
    <location>
        <begin position="326"/>
        <end position="422"/>
    </location>
</feature>
<feature type="transmembrane region" description="Helical" evidence="7">
    <location>
        <begin position="423"/>
        <end position="443"/>
    </location>
</feature>
<feature type="topological domain" description="Extracellular" evidence="12">
    <location>
        <begin position="444"/>
        <end position="453"/>
    </location>
</feature>
<feature type="binding site" evidence="2">
    <location>
        <position position="84"/>
    </location>
    <ligand>
        <name>4-aminobutanoate</name>
        <dbReference type="ChEBI" id="CHEBI:59888"/>
        <note>ligand shared with the neighboring beta subunit</note>
    </ligand>
</feature>
<feature type="binding site" evidence="5">
    <location>
        <position position="147"/>
    </location>
    <ligand>
        <name>4-aminobutanoate</name>
        <dbReference type="ChEBI" id="CHEBI:59888"/>
        <note>ligand shared with the neighboring beta subunit</note>
    </ligand>
</feature>
<feature type="modified residue" description="Phosphoserine" evidence="14">
    <location>
        <position position="375"/>
    </location>
</feature>
<feature type="glycosylation site" description="N-linked (GlcNAc...) asparagine" evidence="7">
    <location>
        <position position="31"/>
    </location>
</feature>
<feature type="glycosylation site" description="N-linked (GlcNAc...) asparagine" evidence="7">
    <location>
        <position position="128"/>
    </location>
</feature>
<feature type="glycosylation site" description="N-linked (GlcNAc...) asparagine" evidence="7">
    <location>
        <position position="141"/>
    </location>
</feature>
<feature type="disulfide bond" evidence="3">
    <location>
        <begin position="156"/>
        <end position="170"/>
    </location>
</feature>
<feature type="splice variant" id="VSP_000085" description="In isoform 3 and isoform 4." evidence="12">
    <original>MVLLLPWLFIILW</original>
    <variation>MRNMKDLEDFSR</variation>
    <location>
        <begin position="1"/>
        <end position="13"/>
    </location>
</feature>
<feature type="splice variant" id="VSP_000086" description="In isoform 2 and isoform 4." evidence="11">
    <location>
        <begin position="76"/>
        <end position="85"/>
    </location>
</feature>
<feature type="sequence conflict" description="In Ref. 1; CAA36244, 2; AAD52001/AAD52002/AAD52003/AAD52004 and 3; AAG28024/AAG28025." evidence="12" ref="1 2 3">
    <original>Q</original>
    <variation>E</variation>
    <location>
        <position position="357"/>
    </location>
</feature>